<sequence length="266" mass="27277">MRPLARLRGRRVVPQRSAGELDAMAAAGAVVAAALRAIRAAAAPGTSSLSLDEIAESVIRESGATPSFLGYHGYPASICASINDRVVHGIPSTAEVLAPGDLVSIDCGAVLDGWHGDAAITFGVGALSDADEALSEATRESLQAGIAAMVVGNRLTDVAHAIETGTRAAELRYGRSFGIVAGYGGHGIGRQMHMDPFLPNEGAPGRGPLLAAGSVLAIEPMLTLGTTKTVVLDDKWTVTTADGSRAAHWEHTVAVTDDGPRILTLG</sequence>
<keyword id="KW-0031">Aminopeptidase</keyword>
<keyword id="KW-0378">Hydrolase</keyword>
<keyword id="KW-0479">Metal-binding</keyword>
<keyword id="KW-0645">Protease</keyword>
<keyword id="KW-1185">Reference proteome</keyword>
<organism>
    <name type="scientific">Mycobacterium tuberculosis (strain CDC 1551 / Oshkosh)</name>
    <dbReference type="NCBI Taxonomy" id="83331"/>
    <lineage>
        <taxon>Bacteria</taxon>
        <taxon>Bacillati</taxon>
        <taxon>Actinomycetota</taxon>
        <taxon>Actinomycetes</taxon>
        <taxon>Mycobacteriales</taxon>
        <taxon>Mycobacteriaceae</taxon>
        <taxon>Mycobacterium</taxon>
        <taxon>Mycobacterium tuberculosis complex</taxon>
    </lineage>
</organism>
<gene>
    <name evidence="1" type="primary">map-1</name>
    <name type="synonym">mapA</name>
    <name type="ordered locus">MT0758</name>
</gene>
<protein>
    <recommendedName>
        <fullName evidence="1">Methionine aminopeptidase 1</fullName>
        <shortName evidence="1">MAP 1</shortName>
        <shortName evidence="1">MetAP 1</shortName>
        <ecNumber evidence="1">3.4.11.18</ecNumber>
    </recommendedName>
    <alternativeName>
        <fullName evidence="1">Peptidase M</fullName>
    </alternativeName>
</protein>
<evidence type="ECO:0000255" key="1">
    <source>
        <dbReference type="HAMAP-Rule" id="MF_01974"/>
    </source>
</evidence>
<dbReference type="EC" id="3.4.11.18" evidence="1"/>
<dbReference type="EMBL" id="AE000516">
    <property type="protein sequence ID" value="AAK44992.1"/>
    <property type="molecule type" value="Genomic_DNA"/>
</dbReference>
<dbReference type="SMR" id="P9WK20"/>
<dbReference type="KEGG" id="mtc:MT0758"/>
<dbReference type="PATRIC" id="fig|83331.31.peg.812"/>
<dbReference type="HOGENOM" id="CLU_015857_0_1_11"/>
<dbReference type="Proteomes" id="UP000001020">
    <property type="component" value="Chromosome"/>
</dbReference>
<dbReference type="GO" id="GO:0005829">
    <property type="term" value="C:cytosol"/>
    <property type="evidence" value="ECO:0007669"/>
    <property type="project" value="TreeGrafter"/>
</dbReference>
<dbReference type="GO" id="GO:0004239">
    <property type="term" value="F:initiator methionyl aminopeptidase activity"/>
    <property type="evidence" value="ECO:0007669"/>
    <property type="project" value="UniProtKB-UniRule"/>
</dbReference>
<dbReference type="GO" id="GO:0046872">
    <property type="term" value="F:metal ion binding"/>
    <property type="evidence" value="ECO:0007669"/>
    <property type="project" value="UniProtKB-UniRule"/>
</dbReference>
<dbReference type="GO" id="GO:0070006">
    <property type="term" value="F:metalloaminopeptidase activity"/>
    <property type="evidence" value="ECO:0007669"/>
    <property type="project" value="UniProtKB-UniRule"/>
</dbReference>
<dbReference type="GO" id="GO:0006508">
    <property type="term" value="P:proteolysis"/>
    <property type="evidence" value="ECO:0007669"/>
    <property type="project" value="UniProtKB-KW"/>
</dbReference>
<dbReference type="CDD" id="cd01086">
    <property type="entry name" value="MetAP1"/>
    <property type="match status" value="1"/>
</dbReference>
<dbReference type="Gene3D" id="3.90.230.10">
    <property type="entry name" value="Creatinase/methionine aminopeptidase superfamily"/>
    <property type="match status" value="1"/>
</dbReference>
<dbReference type="HAMAP" id="MF_01974">
    <property type="entry name" value="MetAP_1"/>
    <property type="match status" value="1"/>
</dbReference>
<dbReference type="InterPro" id="IPR036005">
    <property type="entry name" value="Creatinase/aminopeptidase-like"/>
</dbReference>
<dbReference type="InterPro" id="IPR000994">
    <property type="entry name" value="Pept_M24"/>
</dbReference>
<dbReference type="InterPro" id="IPR001714">
    <property type="entry name" value="Pept_M24_MAP"/>
</dbReference>
<dbReference type="InterPro" id="IPR002467">
    <property type="entry name" value="Pept_M24A_MAP1"/>
</dbReference>
<dbReference type="NCBIfam" id="TIGR00500">
    <property type="entry name" value="met_pdase_I"/>
    <property type="match status" value="1"/>
</dbReference>
<dbReference type="PANTHER" id="PTHR43330">
    <property type="entry name" value="METHIONINE AMINOPEPTIDASE"/>
    <property type="match status" value="1"/>
</dbReference>
<dbReference type="PANTHER" id="PTHR43330:SF27">
    <property type="entry name" value="METHIONINE AMINOPEPTIDASE"/>
    <property type="match status" value="1"/>
</dbReference>
<dbReference type="Pfam" id="PF00557">
    <property type="entry name" value="Peptidase_M24"/>
    <property type="match status" value="1"/>
</dbReference>
<dbReference type="PRINTS" id="PR00599">
    <property type="entry name" value="MAPEPTIDASE"/>
</dbReference>
<dbReference type="SUPFAM" id="SSF55920">
    <property type="entry name" value="Creatinase/aminopeptidase"/>
    <property type="match status" value="1"/>
</dbReference>
<name>MAP11_MYCTO</name>
<proteinExistence type="inferred from homology"/>
<comment type="function">
    <text evidence="1">Removes the N-terminal methionine from nascent proteins. The N-terminal methionine is often cleaved when the second residue in the primary sequence is small and uncharged (Met-Ala-, Cys, Gly, Pro, Ser, Thr, or Val). Requires deformylation of the N(alpha)-formylated initiator methionine before it can be hydrolyzed.</text>
</comment>
<comment type="catalytic activity">
    <reaction evidence="1">
        <text>Release of N-terminal amino acids, preferentially methionine, from peptides and arylamides.</text>
        <dbReference type="EC" id="3.4.11.18"/>
    </reaction>
</comment>
<comment type="cofactor">
    <cofactor evidence="1">
        <name>Co(2+)</name>
        <dbReference type="ChEBI" id="CHEBI:48828"/>
    </cofactor>
    <cofactor evidence="1">
        <name>Zn(2+)</name>
        <dbReference type="ChEBI" id="CHEBI:29105"/>
    </cofactor>
    <cofactor evidence="1">
        <name>Mn(2+)</name>
        <dbReference type="ChEBI" id="CHEBI:29035"/>
    </cofactor>
    <cofactor evidence="1">
        <name>Fe(2+)</name>
        <dbReference type="ChEBI" id="CHEBI:29033"/>
    </cofactor>
    <text evidence="1">Binds 2 divalent metal cations per subunit. Has a high-affinity and a low affinity metal-binding site. The true nature of the physiological cofactor is under debate. The enzyme is active with cobalt, zinc, manganese or divalent iron ions. Most likely, methionine aminopeptidases function as mononuclear Fe(2+)-metalloproteases under physiological conditions, and the catalytically relevant metal-binding site has been assigned to the histidine-containing high-affinity site.</text>
</comment>
<comment type="subunit">
    <text evidence="1">Monomer.</text>
</comment>
<comment type="similarity">
    <text evidence="1">Belongs to the peptidase M24A family. Methionine aminopeptidase type 1 subfamily.</text>
</comment>
<reference key="1">
    <citation type="journal article" date="2002" name="J. Bacteriol.">
        <title>Whole-genome comparison of Mycobacterium tuberculosis clinical and laboratory strains.</title>
        <authorList>
            <person name="Fleischmann R.D."/>
            <person name="Alland D."/>
            <person name="Eisen J.A."/>
            <person name="Carpenter L."/>
            <person name="White O."/>
            <person name="Peterson J.D."/>
            <person name="DeBoy R.T."/>
            <person name="Dodson R.J."/>
            <person name="Gwinn M.L."/>
            <person name="Haft D.H."/>
            <person name="Hickey E.K."/>
            <person name="Kolonay J.F."/>
            <person name="Nelson W.C."/>
            <person name="Umayam L.A."/>
            <person name="Ermolaeva M.D."/>
            <person name="Salzberg S.L."/>
            <person name="Delcher A."/>
            <person name="Utterback T.R."/>
            <person name="Weidman J.F."/>
            <person name="Khouri H.M."/>
            <person name="Gill J."/>
            <person name="Mikula A."/>
            <person name="Bishai W."/>
            <person name="Jacobs W.R. Jr."/>
            <person name="Venter J.C."/>
            <person name="Fraser C.M."/>
        </authorList>
    </citation>
    <scope>NUCLEOTIDE SEQUENCE [LARGE SCALE GENOMIC DNA]</scope>
    <source>
        <strain>CDC 1551 / Oshkosh</strain>
    </source>
</reference>
<feature type="chain" id="PRO_0000427730" description="Methionine aminopeptidase 1">
    <location>
        <begin position="1"/>
        <end position="266"/>
    </location>
</feature>
<feature type="binding site" evidence="1">
    <location>
        <position position="88"/>
    </location>
    <ligand>
        <name>substrate</name>
    </ligand>
</feature>
<feature type="binding site" evidence="1">
    <location>
        <position position="106"/>
    </location>
    <ligand>
        <name>a divalent metal cation</name>
        <dbReference type="ChEBI" id="CHEBI:60240"/>
        <label>1</label>
    </ligand>
</feature>
<feature type="binding site" evidence="1">
    <location>
        <position position="117"/>
    </location>
    <ligand>
        <name>a divalent metal cation</name>
        <dbReference type="ChEBI" id="CHEBI:60240"/>
        <label>1</label>
    </ligand>
</feature>
<feature type="binding site" evidence="1">
    <location>
        <position position="117"/>
    </location>
    <ligand>
        <name>a divalent metal cation</name>
        <dbReference type="ChEBI" id="CHEBI:60240"/>
        <label>2</label>
        <note>catalytic</note>
    </ligand>
</feature>
<feature type="binding site" evidence="1">
    <location>
        <position position="186"/>
    </location>
    <ligand>
        <name>a divalent metal cation</name>
        <dbReference type="ChEBI" id="CHEBI:60240"/>
        <label>2</label>
        <note>catalytic</note>
    </ligand>
</feature>
<feature type="binding site" evidence="1">
    <location>
        <position position="193"/>
    </location>
    <ligand>
        <name>substrate</name>
    </ligand>
</feature>
<feature type="binding site" evidence="1">
    <location>
        <position position="219"/>
    </location>
    <ligand>
        <name>a divalent metal cation</name>
        <dbReference type="ChEBI" id="CHEBI:60240"/>
        <label>2</label>
        <note>catalytic</note>
    </ligand>
</feature>
<feature type="binding site" evidence="1">
    <location>
        <position position="250"/>
    </location>
    <ligand>
        <name>a divalent metal cation</name>
        <dbReference type="ChEBI" id="CHEBI:60240"/>
        <label>1</label>
    </ligand>
</feature>
<feature type="binding site" evidence="1">
    <location>
        <position position="250"/>
    </location>
    <ligand>
        <name>a divalent metal cation</name>
        <dbReference type="ChEBI" id="CHEBI:60240"/>
        <label>2</label>
        <note>catalytic</note>
    </ligand>
</feature>
<accession>P9WK20</accession>
<accession>L0T6B7</accession>
<accession>Q79FX0</accession>
<accession>Q7D9D5</accession>